<evidence type="ECO:0000250" key="1"/>
<evidence type="ECO:0000250" key="2">
    <source>
        <dbReference type="UniProtKB" id="Q9QXZ9"/>
    </source>
</evidence>
<evidence type="ECO:0000255" key="3"/>
<evidence type="ECO:0000255" key="4">
    <source>
        <dbReference type="PROSITE-ProRule" id="PRU00521"/>
    </source>
</evidence>
<evidence type="ECO:0000256" key="5">
    <source>
        <dbReference type="SAM" id="MobiDB-lite"/>
    </source>
</evidence>
<evidence type="ECO:0000305" key="6"/>
<evidence type="ECO:0000312" key="7">
    <source>
        <dbReference type="EMBL" id="AAX73256.1"/>
    </source>
</evidence>
<accession>Q2KNE5</accession>
<accession>B3DH91</accession>
<organism>
    <name type="scientific">Danio rerio</name>
    <name type="common">Zebrafish</name>
    <name type="synonym">Brachydanio rerio</name>
    <dbReference type="NCBI Taxonomy" id="7955"/>
    <lineage>
        <taxon>Eukaryota</taxon>
        <taxon>Metazoa</taxon>
        <taxon>Chordata</taxon>
        <taxon>Craniata</taxon>
        <taxon>Vertebrata</taxon>
        <taxon>Euteleostomi</taxon>
        <taxon>Actinopterygii</taxon>
        <taxon>Neopterygii</taxon>
        <taxon>Teleostei</taxon>
        <taxon>Ostariophysi</taxon>
        <taxon>Cypriniformes</taxon>
        <taxon>Danionidae</taxon>
        <taxon>Danioninae</taxon>
        <taxon>Danio</taxon>
    </lineage>
</organism>
<protein>
    <recommendedName>
        <fullName>Melanopsin-A</fullName>
    </recommendedName>
    <alternativeName>
        <fullName>Mammalian-like melanopsin</fullName>
    </alternativeName>
    <alternativeName>
        <fullName>Melanopsin-M</fullName>
    </alternativeName>
    <alternativeName>
        <fullName>Opsin-4-A</fullName>
    </alternativeName>
    <alternativeName>
        <fullName>Opsin-4M</fullName>
    </alternativeName>
</protein>
<dbReference type="EMBL" id="BX897719">
    <property type="status" value="NOT_ANNOTATED_CDS"/>
    <property type="molecule type" value="Genomic_DNA"/>
</dbReference>
<dbReference type="EMBL" id="BC162681">
    <property type="protein sequence ID" value="AAI62681.1"/>
    <property type="molecule type" value="mRNA"/>
</dbReference>
<dbReference type="EMBL" id="AY882945">
    <property type="protein sequence ID" value="AAX73256.1"/>
    <property type="molecule type" value="mRNA"/>
</dbReference>
<dbReference type="RefSeq" id="NP_001122233.2">
    <property type="nucleotide sequence ID" value="NM_001128761.2"/>
</dbReference>
<dbReference type="SMR" id="Q2KNE5"/>
<dbReference type="FunCoup" id="Q2KNE5">
    <property type="interactions" value="1327"/>
</dbReference>
<dbReference type="STRING" id="7955.ENSDARP00000109133"/>
<dbReference type="PaxDb" id="7955-ENSDARP00000109133"/>
<dbReference type="Ensembl" id="ENSDART00000185271">
    <property type="protein sequence ID" value="ENSDARP00000148289"/>
    <property type="gene ID" value="ENSDARG00000110010"/>
</dbReference>
<dbReference type="GeneID" id="571624"/>
<dbReference type="KEGG" id="dre:571624"/>
<dbReference type="AGR" id="ZFIN:ZDB-GENE-070111-2"/>
<dbReference type="CTD" id="571624"/>
<dbReference type="ZFIN" id="ZDB-GENE-070111-2">
    <property type="gene designation" value="opn4a"/>
</dbReference>
<dbReference type="eggNOG" id="KOG3656">
    <property type="taxonomic scope" value="Eukaryota"/>
</dbReference>
<dbReference type="InParanoid" id="Q2KNE5"/>
<dbReference type="OMA" id="MAAWTYS"/>
<dbReference type="OrthoDB" id="9996086at2759"/>
<dbReference type="PhylomeDB" id="Q2KNE5"/>
<dbReference type="Reactome" id="R-DRE-416476">
    <property type="pathway name" value="G alpha (q) signalling events"/>
</dbReference>
<dbReference type="Reactome" id="R-DRE-419771">
    <property type="pathway name" value="Opsins"/>
</dbReference>
<dbReference type="PRO" id="PR:Q2KNE5"/>
<dbReference type="Proteomes" id="UP000000437">
    <property type="component" value="Alternate scaffold 13"/>
</dbReference>
<dbReference type="Proteomes" id="UP000000437">
    <property type="component" value="Chromosome 13"/>
</dbReference>
<dbReference type="Bgee" id="ENSDARG00000110010">
    <property type="expression patterns" value="Expressed in inner nuclear layer of retina and 6 other cell types or tissues"/>
</dbReference>
<dbReference type="GO" id="GO:0005886">
    <property type="term" value="C:plasma membrane"/>
    <property type="evidence" value="ECO:0000250"/>
    <property type="project" value="UniProtKB"/>
</dbReference>
<dbReference type="GO" id="GO:0008020">
    <property type="term" value="F:G protein-coupled photoreceptor activity"/>
    <property type="evidence" value="ECO:0000250"/>
    <property type="project" value="ZFIN"/>
</dbReference>
<dbReference type="GO" id="GO:0009881">
    <property type="term" value="F:photoreceptor activity"/>
    <property type="evidence" value="ECO:0000314"/>
    <property type="project" value="ZFIN"/>
</dbReference>
<dbReference type="GO" id="GO:0071482">
    <property type="term" value="P:cellular response to light stimulus"/>
    <property type="evidence" value="ECO:0000318"/>
    <property type="project" value="GO_Central"/>
</dbReference>
<dbReference type="GO" id="GO:0007186">
    <property type="term" value="P:G protein-coupled receptor signaling pathway"/>
    <property type="evidence" value="ECO:0000314"/>
    <property type="project" value="ZFIN"/>
</dbReference>
<dbReference type="GO" id="GO:0007602">
    <property type="term" value="P:phototransduction"/>
    <property type="evidence" value="ECO:0000318"/>
    <property type="project" value="GO_Central"/>
</dbReference>
<dbReference type="GO" id="GO:0007601">
    <property type="term" value="P:visual perception"/>
    <property type="evidence" value="ECO:0007669"/>
    <property type="project" value="InterPro"/>
</dbReference>
<dbReference type="CDD" id="cd15336">
    <property type="entry name" value="7tmA_Melanopsin"/>
    <property type="match status" value="1"/>
</dbReference>
<dbReference type="FunFam" id="1.20.1070.10:FF:000083">
    <property type="entry name" value="Melanopsin 1"/>
    <property type="match status" value="1"/>
</dbReference>
<dbReference type="Gene3D" id="1.20.1070.10">
    <property type="entry name" value="Rhodopsin 7-helix transmembrane proteins"/>
    <property type="match status" value="1"/>
</dbReference>
<dbReference type="InterPro" id="IPR050125">
    <property type="entry name" value="GPCR_opsins"/>
</dbReference>
<dbReference type="InterPro" id="IPR000276">
    <property type="entry name" value="GPCR_Rhodpsn"/>
</dbReference>
<dbReference type="InterPro" id="IPR017452">
    <property type="entry name" value="GPCR_Rhodpsn_7TM"/>
</dbReference>
<dbReference type="InterPro" id="IPR001760">
    <property type="entry name" value="Opsin"/>
</dbReference>
<dbReference type="InterPro" id="IPR027430">
    <property type="entry name" value="Retinal_BS"/>
</dbReference>
<dbReference type="PANTHER" id="PTHR24240">
    <property type="entry name" value="OPSIN"/>
    <property type="match status" value="1"/>
</dbReference>
<dbReference type="Pfam" id="PF00001">
    <property type="entry name" value="7tm_1"/>
    <property type="match status" value="1"/>
</dbReference>
<dbReference type="PRINTS" id="PR00237">
    <property type="entry name" value="GPCRRHODOPSN"/>
</dbReference>
<dbReference type="PRINTS" id="PR00238">
    <property type="entry name" value="OPSIN"/>
</dbReference>
<dbReference type="SMART" id="SM01381">
    <property type="entry name" value="7TM_GPCR_Srsx"/>
    <property type="match status" value="1"/>
</dbReference>
<dbReference type="SUPFAM" id="SSF81321">
    <property type="entry name" value="Family A G protein-coupled receptor-like"/>
    <property type="match status" value="1"/>
</dbReference>
<dbReference type="PROSITE" id="PS00237">
    <property type="entry name" value="G_PROTEIN_RECEP_F1_1"/>
    <property type="match status" value="1"/>
</dbReference>
<dbReference type="PROSITE" id="PS50262">
    <property type="entry name" value="G_PROTEIN_RECEP_F1_2"/>
    <property type="match status" value="1"/>
</dbReference>
<dbReference type="PROSITE" id="PS00238">
    <property type="entry name" value="OPSIN"/>
    <property type="match status" value="1"/>
</dbReference>
<comment type="function">
    <text evidence="2">Photoreceptor implicated in non-image-forming responses to light. May be able to isomerize covalently bound all-trans retinal back to 11-cis retinal (By similarity).</text>
</comment>
<comment type="subcellular location">
    <subcellularLocation>
        <location evidence="2">Cell membrane</location>
        <topology evidence="3">Multi-pass membrane protein</topology>
    </subcellularLocation>
</comment>
<comment type="similarity">
    <text evidence="4">Belongs to the G-protein coupled receptor 1 family. Opsin subfamily.</text>
</comment>
<feature type="chain" id="PRO_0000271894" description="Melanopsin-A">
    <location>
        <begin position="1"/>
        <end position="593"/>
    </location>
</feature>
<feature type="topological domain" description="Extracellular" evidence="3">
    <location>
        <begin position="1"/>
        <end position="77"/>
    </location>
</feature>
<feature type="transmembrane region" description="Helical; Name=1" evidence="3">
    <location>
        <begin position="78"/>
        <end position="98"/>
    </location>
</feature>
<feature type="topological domain" description="Cytoplasmic" evidence="3">
    <location>
        <begin position="99"/>
        <end position="112"/>
    </location>
</feature>
<feature type="transmembrane region" description="Helical; Name=2" evidence="3">
    <location>
        <begin position="113"/>
        <end position="133"/>
    </location>
</feature>
<feature type="topological domain" description="Extracellular" evidence="3">
    <location>
        <begin position="134"/>
        <end position="150"/>
    </location>
</feature>
<feature type="transmembrane region" description="Helical; Name=3" evidence="3">
    <location>
        <begin position="151"/>
        <end position="171"/>
    </location>
</feature>
<feature type="topological domain" description="Cytoplasmic" evidence="3">
    <location>
        <begin position="172"/>
        <end position="191"/>
    </location>
</feature>
<feature type="transmembrane region" description="Helical; Name=4" evidence="3">
    <location>
        <begin position="192"/>
        <end position="212"/>
    </location>
</feature>
<feature type="topological domain" description="Extracellular" evidence="3">
    <location>
        <begin position="213"/>
        <end position="243"/>
    </location>
</feature>
<feature type="transmembrane region" description="Helical; Name=5" evidence="3">
    <location>
        <begin position="244"/>
        <end position="264"/>
    </location>
</feature>
<feature type="topological domain" description="Cytoplasmic" evidence="3">
    <location>
        <begin position="265"/>
        <end position="300"/>
    </location>
</feature>
<feature type="transmembrane region" description="Helical; Name=6" evidence="3">
    <location>
        <begin position="301"/>
        <end position="321"/>
    </location>
</feature>
<feature type="topological domain" description="Extracellular" evidence="3">
    <location>
        <begin position="322"/>
        <end position="336"/>
    </location>
</feature>
<feature type="transmembrane region" description="Helical; Name=7" evidence="3">
    <location>
        <begin position="337"/>
        <end position="357"/>
    </location>
</feature>
<feature type="topological domain" description="Cytoplasmic" evidence="3">
    <location>
        <begin position="358"/>
        <end position="593"/>
    </location>
</feature>
<feature type="region of interest" description="Disordered" evidence="5">
    <location>
        <begin position="397"/>
        <end position="449"/>
    </location>
</feature>
<feature type="region of interest" description="Disordered" evidence="5">
    <location>
        <begin position="547"/>
        <end position="593"/>
    </location>
</feature>
<feature type="compositionally biased region" description="Polar residues" evidence="5">
    <location>
        <begin position="414"/>
        <end position="449"/>
    </location>
</feature>
<feature type="compositionally biased region" description="Basic and acidic residues" evidence="5">
    <location>
        <begin position="581"/>
        <end position="593"/>
    </location>
</feature>
<feature type="modified residue" description="N6-(retinylidene)lysine" evidence="1">
    <location>
        <position position="344"/>
    </location>
</feature>
<feature type="disulfide bond" evidence="4">
    <location>
        <begin position="148"/>
        <end position="226"/>
    </location>
</feature>
<feature type="sequence conflict" description="In Ref. 2; AAI62681." evidence="6" ref="2">
    <original>V</original>
    <variation>I</variation>
    <location>
        <position position="378"/>
    </location>
</feature>
<keyword id="KW-1003">Cell membrane</keyword>
<keyword id="KW-0157">Chromophore</keyword>
<keyword id="KW-1015">Disulfide bond</keyword>
<keyword id="KW-0297">G-protein coupled receptor</keyword>
<keyword id="KW-0472">Membrane</keyword>
<keyword id="KW-0600">Photoreceptor protein</keyword>
<keyword id="KW-0675">Receptor</keyword>
<keyword id="KW-1185">Reference proteome</keyword>
<keyword id="KW-0681">Retinal protein</keyword>
<keyword id="KW-0716">Sensory transduction</keyword>
<keyword id="KW-0807">Transducer</keyword>
<keyword id="KW-0812">Transmembrane</keyword>
<keyword id="KW-1133">Transmembrane helix</keyword>
<reference key="1">
    <citation type="journal article" date="2013" name="Nature">
        <title>The zebrafish reference genome sequence and its relationship to the human genome.</title>
        <authorList>
            <person name="Howe K."/>
            <person name="Clark M.D."/>
            <person name="Torroja C.F."/>
            <person name="Torrance J."/>
            <person name="Berthelot C."/>
            <person name="Muffato M."/>
            <person name="Collins J.E."/>
            <person name="Humphray S."/>
            <person name="McLaren K."/>
            <person name="Matthews L."/>
            <person name="McLaren S."/>
            <person name="Sealy I."/>
            <person name="Caccamo M."/>
            <person name="Churcher C."/>
            <person name="Scott C."/>
            <person name="Barrett J.C."/>
            <person name="Koch R."/>
            <person name="Rauch G.J."/>
            <person name="White S."/>
            <person name="Chow W."/>
            <person name="Kilian B."/>
            <person name="Quintais L.T."/>
            <person name="Guerra-Assuncao J.A."/>
            <person name="Zhou Y."/>
            <person name="Gu Y."/>
            <person name="Yen J."/>
            <person name="Vogel J.H."/>
            <person name="Eyre T."/>
            <person name="Redmond S."/>
            <person name="Banerjee R."/>
            <person name="Chi J."/>
            <person name="Fu B."/>
            <person name="Langley E."/>
            <person name="Maguire S.F."/>
            <person name="Laird G.K."/>
            <person name="Lloyd D."/>
            <person name="Kenyon E."/>
            <person name="Donaldson S."/>
            <person name="Sehra H."/>
            <person name="Almeida-King J."/>
            <person name="Loveland J."/>
            <person name="Trevanion S."/>
            <person name="Jones M."/>
            <person name="Quail M."/>
            <person name="Willey D."/>
            <person name="Hunt A."/>
            <person name="Burton J."/>
            <person name="Sims S."/>
            <person name="McLay K."/>
            <person name="Plumb B."/>
            <person name="Davis J."/>
            <person name="Clee C."/>
            <person name="Oliver K."/>
            <person name="Clark R."/>
            <person name="Riddle C."/>
            <person name="Elliot D."/>
            <person name="Threadgold G."/>
            <person name="Harden G."/>
            <person name="Ware D."/>
            <person name="Begum S."/>
            <person name="Mortimore B."/>
            <person name="Kerry G."/>
            <person name="Heath P."/>
            <person name="Phillimore B."/>
            <person name="Tracey A."/>
            <person name="Corby N."/>
            <person name="Dunn M."/>
            <person name="Johnson C."/>
            <person name="Wood J."/>
            <person name="Clark S."/>
            <person name="Pelan S."/>
            <person name="Griffiths G."/>
            <person name="Smith M."/>
            <person name="Glithero R."/>
            <person name="Howden P."/>
            <person name="Barker N."/>
            <person name="Lloyd C."/>
            <person name="Stevens C."/>
            <person name="Harley J."/>
            <person name="Holt K."/>
            <person name="Panagiotidis G."/>
            <person name="Lovell J."/>
            <person name="Beasley H."/>
            <person name="Henderson C."/>
            <person name="Gordon D."/>
            <person name="Auger K."/>
            <person name="Wright D."/>
            <person name="Collins J."/>
            <person name="Raisen C."/>
            <person name="Dyer L."/>
            <person name="Leung K."/>
            <person name="Robertson L."/>
            <person name="Ambridge K."/>
            <person name="Leongamornlert D."/>
            <person name="McGuire S."/>
            <person name="Gilderthorp R."/>
            <person name="Griffiths C."/>
            <person name="Manthravadi D."/>
            <person name="Nichol S."/>
            <person name="Barker G."/>
            <person name="Whitehead S."/>
            <person name="Kay M."/>
            <person name="Brown J."/>
            <person name="Murnane C."/>
            <person name="Gray E."/>
            <person name="Humphries M."/>
            <person name="Sycamore N."/>
            <person name="Barker D."/>
            <person name="Saunders D."/>
            <person name="Wallis J."/>
            <person name="Babbage A."/>
            <person name="Hammond S."/>
            <person name="Mashreghi-Mohammadi M."/>
            <person name="Barr L."/>
            <person name="Martin S."/>
            <person name="Wray P."/>
            <person name="Ellington A."/>
            <person name="Matthews N."/>
            <person name="Ellwood M."/>
            <person name="Woodmansey R."/>
            <person name="Clark G."/>
            <person name="Cooper J."/>
            <person name="Tromans A."/>
            <person name="Grafham D."/>
            <person name="Skuce C."/>
            <person name="Pandian R."/>
            <person name="Andrews R."/>
            <person name="Harrison E."/>
            <person name="Kimberley A."/>
            <person name="Garnett J."/>
            <person name="Fosker N."/>
            <person name="Hall R."/>
            <person name="Garner P."/>
            <person name="Kelly D."/>
            <person name="Bird C."/>
            <person name="Palmer S."/>
            <person name="Gehring I."/>
            <person name="Berger A."/>
            <person name="Dooley C.M."/>
            <person name="Ersan-Urun Z."/>
            <person name="Eser C."/>
            <person name="Geiger H."/>
            <person name="Geisler M."/>
            <person name="Karotki L."/>
            <person name="Kirn A."/>
            <person name="Konantz J."/>
            <person name="Konantz M."/>
            <person name="Oberlander M."/>
            <person name="Rudolph-Geiger S."/>
            <person name="Teucke M."/>
            <person name="Lanz C."/>
            <person name="Raddatz G."/>
            <person name="Osoegawa K."/>
            <person name="Zhu B."/>
            <person name="Rapp A."/>
            <person name="Widaa S."/>
            <person name="Langford C."/>
            <person name="Yang F."/>
            <person name="Schuster S.C."/>
            <person name="Carter N.P."/>
            <person name="Harrow J."/>
            <person name="Ning Z."/>
            <person name="Herrero J."/>
            <person name="Searle S.M."/>
            <person name="Enright A."/>
            <person name="Geisler R."/>
            <person name="Plasterk R.H."/>
            <person name="Lee C."/>
            <person name="Westerfield M."/>
            <person name="de Jong P.J."/>
            <person name="Zon L.I."/>
            <person name="Postlethwait J.H."/>
            <person name="Nusslein-Volhard C."/>
            <person name="Hubbard T.J."/>
            <person name="Roest Crollius H."/>
            <person name="Rogers J."/>
            <person name="Stemple D.L."/>
        </authorList>
    </citation>
    <scope>NUCLEOTIDE SEQUENCE [LARGE SCALE GENOMIC DNA]</scope>
    <source>
        <strain>Tuebingen</strain>
    </source>
</reference>
<reference evidence="6" key="2">
    <citation type="submission" date="2008-04" db="EMBL/GenBank/DDBJ databases">
        <authorList>
            <consortium name="NIH - Zebrafish Gene Collection (ZGC) project"/>
        </authorList>
    </citation>
    <scope>NUCLEOTIDE SEQUENCE [LARGE SCALE MRNA]</scope>
</reference>
<reference evidence="6 7" key="3">
    <citation type="journal article" date="2006" name="PLoS Biol.">
        <title>Evolution of melanopsin photoreceptors: discovery and characterization of a new melanopsin in nonmammalian vertebrates.</title>
        <authorList>
            <person name="Bellingham J."/>
            <person name="Chaurasia S.S."/>
            <person name="Melyan Z."/>
            <person name="Liu C."/>
            <person name="Cameron M.A."/>
            <person name="Tarttelin E.E."/>
            <person name="Iuvone P.M."/>
            <person name="Hankins M.W."/>
            <person name="Tosini G."/>
            <person name="Lucas R.J."/>
        </authorList>
    </citation>
    <scope>NUCLEOTIDE SEQUENCE [MRNA] OF 74-430</scope>
    <source>
        <tissue evidence="7">Retina</tissue>
    </source>
</reference>
<gene>
    <name type="primary">opn4a</name>
    <name type="synonym">opn4</name>
    <name evidence="7" type="synonym">opn4d</name>
    <name type="synonym">opn4m1</name>
</gene>
<name>OPN4A_DANRE</name>
<proteinExistence type="evidence at transcript level"/>
<sequence>MMSGAAHSVRKGISCPTQDPNCTRIVESLSAWNDSVMSAYRLVDLPPTTTTTTSVAMVEESVYPFPTVDVPDHAHYTIGAVILTVGITGMLGNFLVIYAFSRSRTLRTPANLFIINLAITDFLMCATQAPIFFTTSMHKRWIFGEKGCELYAFCGALFGICSMITLMVIAVDRYFVITRPLASIGVLSQKRALLILLVAWVYSLGWSLPPFFGWSAYVPEGLLTSCTWDYMTFTPSVRAYTMLLFIFVFFIPLIVIIYCYFFIFRSIRTTNEAVGKINGDNKRDSMKRFQRLKNEWKMAKIALIVILMYVISWSPYSTVALTAFAGYSDFLTPYMNSVPAVIAKASAIHNPIIYAITHPKYRLAIAKYIPCLRLLLCVPKRDLHSFHSSLMSTRRSTVTSQSSDMSGRFRRTSTGKSRLSSASDSESGWTDTEADLSSMSSRPASRQVSCDISKDTAEMPDFKPCNSSSFKSKLKSHDSGIFEKSSSDVDDVSVAGIIQPDRTLTNAGDITDVPISRGAIGRIPSIVITSESSSLLPSVRPTYRISRSNVSTVGTNPARRDSRGGVQQGAAHLSNAAETPESGHIDNHRPQYL</sequence>